<name>HPT_CEREL</name>
<gene>
    <name type="primary">HP</name>
</gene>
<feature type="signal peptide" evidence="1">
    <location>
        <begin position="1"/>
        <end position="18"/>
    </location>
</feature>
<feature type="chain" id="PRO_0000367495" description="Haptoglobin">
    <location>
        <begin position="19"/>
        <end position="400"/>
    </location>
</feature>
<feature type="chain" id="PRO_0000367496" description="Haptoglobin alpha chain" evidence="1">
    <location>
        <begin position="19"/>
        <end position="154"/>
    </location>
</feature>
<feature type="chain" id="PRO_0000367497" description="Haptoglobin beta chain" evidence="1">
    <location>
        <begin position="156"/>
        <end position="400"/>
    </location>
</feature>
<feature type="domain" description="Sushi 1" evidence="6">
    <location>
        <begin position="28"/>
        <end position="83"/>
    </location>
</feature>
<feature type="domain" description="Sushi 2" evidence="6">
    <location>
        <begin position="84"/>
        <end position="141"/>
    </location>
</feature>
<feature type="domain" description="Peptidase S1" evidence="5">
    <location>
        <begin position="156"/>
        <end position="398"/>
    </location>
</feature>
<feature type="region of interest" description="Interaction with CD163" evidence="1">
    <location>
        <begin position="312"/>
        <end position="317"/>
    </location>
</feature>
<feature type="glycosylation site" description="N-linked (GlcNAc...) asparagine" evidence="4">
    <location>
        <position position="285"/>
    </location>
</feature>
<feature type="glycosylation site" description="N-linked (GlcNAc...) asparagine" evidence="4">
    <location>
        <position position="309"/>
    </location>
</feature>
<feature type="glycosylation site" description="N-linked (GlcNAc...) asparagine" evidence="4">
    <location>
        <position position="315"/>
    </location>
</feature>
<feature type="disulfide bond" description="Interchain" evidence="1">
    <location>
        <position position="30"/>
    </location>
</feature>
<feature type="disulfide bond" evidence="1">
    <location>
        <begin position="49"/>
        <end position="81"/>
    </location>
</feature>
<feature type="disulfide bond" description="Interchain" evidence="1">
    <location>
        <position position="86"/>
    </location>
</feature>
<feature type="disulfide bond" evidence="1">
    <location>
        <begin position="105"/>
        <end position="139"/>
    </location>
</feature>
<feature type="disulfide bond" description="Interchain (between alpha and beta chains)" evidence="5 6">
    <location>
        <begin position="143"/>
        <end position="260"/>
    </location>
</feature>
<feature type="disulfide bond" evidence="1">
    <location>
        <begin position="303"/>
        <end position="334"/>
    </location>
</feature>
<feature type="disulfide bond" evidence="1">
    <location>
        <begin position="345"/>
        <end position="375"/>
    </location>
</feature>
<proteinExistence type="evidence at transcript level"/>
<reference key="1">
    <citation type="submission" date="2008-07" db="EMBL/GenBank/DDBJ databases">
        <title>The acute phase proteins in Cervus elaphus.</title>
        <authorList>
            <person name="Rahman M.M.D."/>
            <person name="Lecchi C."/>
            <person name="Miranda-Ribera A."/>
            <person name="Ceciliani F."/>
            <person name="Sartorelli P."/>
        </authorList>
    </citation>
    <scope>NUCLEOTIDE SEQUENCE [MRNA]</scope>
</reference>
<accession>B6D985</accession>
<organism>
    <name type="scientific">Cervus elaphus</name>
    <name type="common">Red deer</name>
    <dbReference type="NCBI Taxonomy" id="9860"/>
    <lineage>
        <taxon>Eukaryota</taxon>
        <taxon>Metazoa</taxon>
        <taxon>Chordata</taxon>
        <taxon>Craniata</taxon>
        <taxon>Vertebrata</taxon>
        <taxon>Euteleostomi</taxon>
        <taxon>Mammalia</taxon>
        <taxon>Eutheria</taxon>
        <taxon>Laurasiatheria</taxon>
        <taxon>Artiodactyla</taxon>
        <taxon>Ruminantia</taxon>
        <taxon>Pecora</taxon>
        <taxon>Cervidae</taxon>
        <taxon>Cervinae</taxon>
        <taxon>Cervus</taxon>
    </lineage>
</organism>
<evidence type="ECO:0000250" key="1"/>
<evidence type="ECO:0000250" key="2">
    <source>
        <dbReference type="UniProtKB" id="P00738"/>
    </source>
</evidence>
<evidence type="ECO:0000250" key="3">
    <source>
        <dbReference type="UniProtKB" id="Q8SPS7"/>
    </source>
</evidence>
<evidence type="ECO:0000255" key="4"/>
<evidence type="ECO:0000255" key="5">
    <source>
        <dbReference type="PROSITE-ProRule" id="PRU00274"/>
    </source>
</evidence>
<evidence type="ECO:0000255" key="6">
    <source>
        <dbReference type="PROSITE-ProRule" id="PRU00302"/>
    </source>
</evidence>
<evidence type="ECO:0000305" key="7"/>
<sequence length="400" mass="44690">MSALPVVVTLLLCGQLLAVEISSEATADSCPKAPEIANSHVEYSVRYQCDKYYKLRAGDGVYTFNNKQWINKDIGQQLPECEDASCPEPPKIENGYVEHSIRFQCKTYYKLRSAGDGVYTFNSKKQWINKNVGQQLPECEAVCGKPKHPVDQVQRIIGGSLDAKGSFPWQAKMVSHHNLISGATLINERWLLTTAKNLYLGHTSDKKAKDIAPTLRLYVGKNQPVEVEKVVLHPDRSKVDIGLIKLRQKVPVNEKVMPICLPSKDYVAVGRVGYVSGWGRNANFNFTEHLKYIMLPVADQDKCVEHYENSTVPENKTDKSPVGVQPILNKNTFCVGLSKYQEDTCYGDAGSAFVVHDQEDDTWYAAGILSFDKSCAVAEYGVYVKVTSILDWVRKTIADN</sequence>
<protein>
    <recommendedName>
        <fullName>Haptoglobin</fullName>
    </recommendedName>
    <component>
        <recommendedName>
            <fullName>Haptoglobin alpha chain</fullName>
        </recommendedName>
    </component>
    <component>
        <recommendedName>
            <fullName>Haptoglobin beta chain</fullName>
        </recommendedName>
    </component>
</protein>
<keyword id="KW-0011">Acute phase</keyword>
<keyword id="KW-0044">Antibiotic</keyword>
<keyword id="KW-0929">Antimicrobial</keyword>
<keyword id="KW-0049">Antioxidant</keyword>
<keyword id="KW-1015">Disulfide bond</keyword>
<keyword id="KW-0325">Glycoprotein</keyword>
<keyword id="KW-0351">Hemoglobin-binding</keyword>
<keyword id="KW-0391">Immunity</keyword>
<keyword id="KW-0677">Repeat</keyword>
<keyword id="KW-0964">Secreted</keyword>
<keyword id="KW-0721">Serine protease homolog</keyword>
<keyword id="KW-0732">Signal</keyword>
<keyword id="KW-0768">Sushi</keyword>
<dbReference type="EMBL" id="EU884574">
    <property type="protein sequence ID" value="ACH73014.1"/>
    <property type="molecule type" value="mRNA"/>
</dbReference>
<dbReference type="SMR" id="B6D985"/>
<dbReference type="GlyCosmos" id="B6D985">
    <property type="glycosylation" value="3 sites, No reported glycans"/>
</dbReference>
<dbReference type="GO" id="GO:0072562">
    <property type="term" value="C:blood microparticle"/>
    <property type="evidence" value="ECO:0007669"/>
    <property type="project" value="TreeGrafter"/>
</dbReference>
<dbReference type="GO" id="GO:0016209">
    <property type="term" value="F:antioxidant activity"/>
    <property type="evidence" value="ECO:0007669"/>
    <property type="project" value="UniProtKB-KW"/>
</dbReference>
<dbReference type="GO" id="GO:0030492">
    <property type="term" value="F:hemoglobin binding"/>
    <property type="evidence" value="ECO:0007669"/>
    <property type="project" value="UniProtKB-KW"/>
</dbReference>
<dbReference type="GO" id="GO:0006953">
    <property type="term" value="P:acute-phase response"/>
    <property type="evidence" value="ECO:0007669"/>
    <property type="project" value="UniProtKB-KW"/>
</dbReference>
<dbReference type="GO" id="GO:0042742">
    <property type="term" value="P:defense response to bacterium"/>
    <property type="evidence" value="ECO:0007669"/>
    <property type="project" value="UniProtKB-KW"/>
</dbReference>
<dbReference type="GO" id="GO:0002376">
    <property type="term" value="P:immune system process"/>
    <property type="evidence" value="ECO:0007669"/>
    <property type="project" value="UniProtKB-KW"/>
</dbReference>
<dbReference type="CDD" id="cd00033">
    <property type="entry name" value="CCP"/>
    <property type="match status" value="1"/>
</dbReference>
<dbReference type="CDD" id="cd00190">
    <property type="entry name" value="Tryp_SPc"/>
    <property type="match status" value="1"/>
</dbReference>
<dbReference type="FunFam" id="2.10.70.10:FF:000048">
    <property type="entry name" value="Haptoglobin"/>
    <property type="match status" value="1"/>
</dbReference>
<dbReference type="FunFam" id="2.40.10.10:FF:000027">
    <property type="entry name" value="Haptoglobin"/>
    <property type="match status" value="1"/>
</dbReference>
<dbReference type="FunFam" id="2.40.10.10:FF:000031">
    <property type="entry name" value="Haptoglobin"/>
    <property type="match status" value="1"/>
</dbReference>
<dbReference type="Gene3D" id="2.10.70.10">
    <property type="entry name" value="Complement Module, domain 1"/>
    <property type="match status" value="2"/>
</dbReference>
<dbReference type="Gene3D" id="2.40.10.10">
    <property type="entry name" value="Trypsin-like serine proteases"/>
    <property type="match status" value="2"/>
</dbReference>
<dbReference type="InterPro" id="IPR009003">
    <property type="entry name" value="Peptidase_S1_PA"/>
</dbReference>
<dbReference type="InterPro" id="IPR043504">
    <property type="entry name" value="Peptidase_S1_PA_chymotrypsin"/>
</dbReference>
<dbReference type="InterPro" id="IPR001314">
    <property type="entry name" value="Peptidase_S1A"/>
</dbReference>
<dbReference type="InterPro" id="IPR035976">
    <property type="entry name" value="Sushi/SCR/CCP_sf"/>
</dbReference>
<dbReference type="InterPro" id="IPR000436">
    <property type="entry name" value="Sushi_SCR_CCP_dom"/>
</dbReference>
<dbReference type="InterPro" id="IPR001254">
    <property type="entry name" value="Trypsin_dom"/>
</dbReference>
<dbReference type="PANTHER" id="PTHR24255">
    <property type="entry name" value="COMPLEMENT COMPONENT 1, S SUBCOMPONENT-RELATED"/>
    <property type="match status" value="1"/>
</dbReference>
<dbReference type="PANTHER" id="PTHR24255:SF27">
    <property type="entry name" value="HAPTOGLOBIN-RELATED PROTEIN"/>
    <property type="match status" value="1"/>
</dbReference>
<dbReference type="Pfam" id="PF00089">
    <property type="entry name" value="Trypsin"/>
    <property type="match status" value="1"/>
</dbReference>
<dbReference type="PRINTS" id="PR00722">
    <property type="entry name" value="CHYMOTRYPSIN"/>
</dbReference>
<dbReference type="SMART" id="SM00020">
    <property type="entry name" value="Tryp_SPc"/>
    <property type="match status" value="1"/>
</dbReference>
<dbReference type="SUPFAM" id="SSF57535">
    <property type="entry name" value="Complement control module/SCR domain"/>
    <property type="match status" value="2"/>
</dbReference>
<dbReference type="SUPFAM" id="SSF50494">
    <property type="entry name" value="Trypsin-like serine proteases"/>
    <property type="match status" value="1"/>
</dbReference>
<dbReference type="PROSITE" id="PS50923">
    <property type="entry name" value="SUSHI"/>
    <property type="match status" value="2"/>
</dbReference>
<dbReference type="PROSITE" id="PS50240">
    <property type="entry name" value="TRYPSIN_DOM"/>
    <property type="match status" value="1"/>
</dbReference>
<comment type="function">
    <text evidence="1">As a result of hemolysis, hemoglobin is found to accumulate in the kidney and is secreted in the urine. Haptoglobin captures, and combines with free plasma hemoglobin to allow hepatic recycling of heme iron and to prevent kidney damage. Haptoglobin also acts as an antioxidant, has antibacterial activity and plays a role in modulating many aspects of the acute phase response. Hemoglobin/haptoglobin complexes are rapidly cleared by the macrophage CD163 scavenger receptor expressed on the surface of liver Kupfer cells through an endocytic lysosomal degradation pathway (By similarity).</text>
</comment>
<comment type="subunit">
    <text evidence="2 3">Tetramer of two alpha and two beta chains; disulfide-linked (By similarity). The hemoglobin/haptoglobin complex is composed of a haptoglobin dimer bound to two hemoglobin alpha-beta dimers (By similarity). Interacts with CD163 (By similarity). Interacts with ERGIC3 (By similarity).</text>
</comment>
<comment type="subcellular location">
    <subcellularLocation>
        <location evidence="1">Secreted</location>
        <location evidence="1">Extracellular space</location>
    </subcellularLocation>
</comment>
<comment type="tissue specificity">
    <text>Expressed by the liver and secreted in plasma.</text>
</comment>
<comment type="domain">
    <text evidence="1">The beta chain mediates most of the interactions with both subunits of hemoglobin, while the alpha chain forms the homodimeric interface.</text>
</comment>
<comment type="similarity">
    <text evidence="5">Belongs to the peptidase S1 family.</text>
</comment>
<comment type="caution">
    <text evidence="7">Although homologous to serine proteases, it has lost all essential catalytic residues and has no enzymatic activity.</text>
</comment>